<dbReference type="EMBL" id="CR382131">
    <property type="protein sequence ID" value="CAG80199.1"/>
    <property type="molecule type" value="Genomic_DNA"/>
</dbReference>
<dbReference type="RefSeq" id="XP_504595.1">
    <property type="nucleotide sequence ID" value="XM_504595.1"/>
</dbReference>
<dbReference type="SMR" id="Q6C417"/>
<dbReference type="FunCoup" id="Q6C417">
    <property type="interactions" value="1324"/>
</dbReference>
<dbReference type="STRING" id="284591.Q6C417"/>
<dbReference type="EnsemblFungi" id="CAG80199">
    <property type="protein sequence ID" value="CAG80199"/>
    <property type="gene ID" value="YALI0_E30569g"/>
</dbReference>
<dbReference type="KEGG" id="yli:2912068"/>
<dbReference type="VEuPathDB" id="FungiDB:YALI0_E30569g"/>
<dbReference type="HOGENOM" id="CLU_061027_3_0_1"/>
<dbReference type="InParanoid" id="Q6C417"/>
<dbReference type="OMA" id="CHLEDYR"/>
<dbReference type="OrthoDB" id="112571at4891"/>
<dbReference type="Proteomes" id="UP000001300">
    <property type="component" value="Chromosome E"/>
</dbReference>
<dbReference type="GO" id="GO:0071014">
    <property type="term" value="C:post-mRNA release spliceosomal complex"/>
    <property type="evidence" value="ECO:0007669"/>
    <property type="project" value="EnsemblFungi"/>
</dbReference>
<dbReference type="GO" id="GO:0005686">
    <property type="term" value="C:U2 snRNP"/>
    <property type="evidence" value="ECO:0000318"/>
    <property type="project" value="GO_Central"/>
</dbReference>
<dbReference type="GO" id="GO:0030620">
    <property type="term" value="F:U2 snRNA binding"/>
    <property type="evidence" value="ECO:0000318"/>
    <property type="project" value="GO_Central"/>
</dbReference>
<dbReference type="GO" id="GO:0000398">
    <property type="term" value="P:mRNA splicing, via spliceosome"/>
    <property type="evidence" value="ECO:0000318"/>
    <property type="project" value="GO_Central"/>
</dbReference>
<dbReference type="Gene3D" id="3.80.10.10">
    <property type="entry name" value="Ribonuclease Inhibitor"/>
    <property type="match status" value="1"/>
</dbReference>
<dbReference type="InterPro" id="IPR001611">
    <property type="entry name" value="Leu-rich_rpt"/>
</dbReference>
<dbReference type="InterPro" id="IPR032675">
    <property type="entry name" value="LRR_dom_sf"/>
</dbReference>
<dbReference type="InterPro" id="IPR044640">
    <property type="entry name" value="RU2A"/>
</dbReference>
<dbReference type="PANTHER" id="PTHR10552">
    <property type="entry name" value="U2 SMALL NUCLEAR RIBONUCLEOPROTEIN A"/>
    <property type="match status" value="1"/>
</dbReference>
<dbReference type="PANTHER" id="PTHR10552:SF6">
    <property type="entry name" value="U2 SMALL NUCLEAR RIBONUCLEOPROTEIN A"/>
    <property type="match status" value="1"/>
</dbReference>
<dbReference type="Pfam" id="PF14580">
    <property type="entry name" value="LRR_9"/>
    <property type="match status" value="1"/>
</dbReference>
<dbReference type="SUPFAM" id="SSF52058">
    <property type="entry name" value="L domain-like"/>
    <property type="match status" value="1"/>
</dbReference>
<dbReference type="PROSITE" id="PS51450">
    <property type="entry name" value="LRR"/>
    <property type="match status" value="4"/>
</dbReference>
<accession>Q6C417</accession>
<protein>
    <recommendedName>
        <fullName>U2 small nuclear ribonucleoprotein A'</fullName>
        <shortName>U2 snRNP A'</shortName>
    </recommendedName>
</protein>
<sequence>MNFWWLKFDDASTESLRNNIFTNNSITKNMRLNADTILNAQSYINPIGDRELNLRGLQIPVIENLGVTEDHYTSLDLSDNEIRVMGGFPRLETLRTLLLSKNRITQINDVKNIAKLETLVLTQNGIATLGALESLKSLVNLTAITLDGNPVQHVPRYRSYMISILPSLRMLDFQRVTQKERDEAEAMEFDVVPVTETDNLSAVDKAELRERLKNATTIQEIEEIEAMLKV</sequence>
<reference key="1">
    <citation type="journal article" date="2004" name="Nature">
        <title>Genome evolution in yeasts.</title>
        <authorList>
            <person name="Dujon B."/>
            <person name="Sherman D."/>
            <person name="Fischer G."/>
            <person name="Durrens P."/>
            <person name="Casaregola S."/>
            <person name="Lafontaine I."/>
            <person name="de Montigny J."/>
            <person name="Marck C."/>
            <person name="Neuveglise C."/>
            <person name="Talla E."/>
            <person name="Goffard N."/>
            <person name="Frangeul L."/>
            <person name="Aigle M."/>
            <person name="Anthouard V."/>
            <person name="Babour A."/>
            <person name="Barbe V."/>
            <person name="Barnay S."/>
            <person name="Blanchin S."/>
            <person name="Beckerich J.-M."/>
            <person name="Beyne E."/>
            <person name="Bleykasten C."/>
            <person name="Boisrame A."/>
            <person name="Boyer J."/>
            <person name="Cattolico L."/>
            <person name="Confanioleri F."/>
            <person name="de Daruvar A."/>
            <person name="Despons L."/>
            <person name="Fabre E."/>
            <person name="Fairhead C."/>
            <person name="Ferry-Dumazet H."/>
            <person name="Groppi A."/>
            <person name="Hantraye F."/>
            <person name="Hennequin C."/>
            <person name="Jauniaux N."/>
            <person name="Joyet P."/>
            <person name="Kachouri R."/>
            <person name="Kerrest A."/>
            <person name="Koszul R."/>
            <person name="Lemaire M."/>
            <person name="Lesur I."/>
            <person name="Ma L."/>
            <person name="Muller H."/>
            <person name="Nicaud J.-M."/>
            <person name="Nikolski M."/>
            <person name="Oztas S."/>
            <person name="Ozier-Kalogeropoulos O."/>
            <person name="Pellenz S."/>
            <person name="Potier S."/>
            <person name="Richard G.-F."/>
            <person name="Straub M.-L."/>
            <person name="Suleau A."/>
            <person name="Swennen D."/>
            <person name="Tekaia F."/>
            <person name="Wesolowski-Louvel M."/>
            <person name="Westhof E."/>
            <person name="Wirth B."/>
            <person name="Zeniou-Meyer M."/>
            <person name="Zivanovic Y."/>
            <person name="Bolotin-Fukuhara M."/>
            <person name="Thierry A."/>
            <person name="Bouchier C."/>
            <person name="Caudron B."/>
            <person name="Scarpelli C."/>
            <person name="Gaillardin C."/>
            <person name="Weissenbach J."/>
            <person name="Wincker P."/>
            <person name="Souciet J.-L."/>
        </authorList>
    </citation>
    <scope>NUCLEOTIDE SEQUENCE [LARGE SCALE GENOMIC DNA]</scope>
    <source>
        <strain>CLIB 122 / E 150</strain>
    </source>
</reference>
<proteinExistence type="inferred from homology"/>
<organism>
    <name type="scientific">Yarrowia lipolytica (strain CLIB 122 / E 150)</name>
    <name type="common">Yeast</name>
    <name type="synonym">Candida lipolytica</name>
    <dbReference type="NCBI Taxonomy" id="284591"/>
    <lineage>
        <taxon>Eukaryota</taxon>
        <taxon>Fungi</taxon>
        <taxon>Dikarya</taxon>
        <taxon>Ascomycota</taxon>
        <taxon>Saccharomycotina</taxon>
        <taxon>Dipodascomycetes</taxon>
        <taxon>Dipodascales</taxon>
        <taxon>Dipodascales incertae sedis</taxon>
        <taxon>Yarrowia</taxon>
    </lineage>
</organism>
<evidence type="ECO:0000250" key="1"/>
<evidence type="ECO:0000305" key="2"/>
<comment type="function">
    <text evidence="1">Involved in pre-mRNA splicing.</text>
</comment>
<comment type="subunit">
    <text evidence="1">Associated with the spliceosome.</text>
</comment>
<comment type="subcellular location">
    <subcellularLocation>
        <location evidence="1">Nucleus</location>
    </subcellularLocation>
</comment>
<comment type="similarity">
    <text evidence="2">Belongs to the U2 small nuclear ribonucleoprotein A family.</text>
</comment>
<name>RU2A_YARLI</name>
<keyword id="KW-0433">Leucine-rich repeat</keyword>
<keyword id="KW-0507">mRNA processing</keyword>
<keyword id="KW-0508">mRNA splicing</keyword>
<keyword id="KW-0539">Nucleus</keyword>
<keyword id="KW-1185">Reference proteome</keyword>
<keyword id="KW-0677">Repeat</keyword>
<keyword id="KW-0747">Spliceosome</keyword>
<feature type="chain" id="PRO_0000074188" description="U2 small nuclear ribonucleoprotein A'">
    <location>
        <begin position="1"/>
        <end position="230"/>
    </location>
</feature>
<feature type="repeat" description="LRR 1">
    <location>
        <begin position="15"/>
        <end position="36"/>
    </location>
</feature>
<feature type="repeat" description="LRR 2">
    <location>
        <begin position="48"/>
        <end position="69"/>
    </location>
</feature>
<feature type="repeat" description="LRR 3">
    <location>
        <begin position="71"/>
        <end position="92"/>
    </location>
</feature>
<feature type="repeat" description="LRR 4">
    <location>
        <begin position="93"/>
        <end position="114"/>
    </location>
</feature>
<feature type="repeat" description="LRR 5">
    <location>
        <begin position="115"/>
        <end position="136"/>
    </location>
</feature>
<feature type="domain" description="LRRCT">
    <location>
        <begin position="149"/>
        <end position="187"/>
    </location>
</feature>
<gene>
    <name type="primary">LEA1</name>
    <name type="ordered locus">YALI0E30569g</name>
</gene>